<comment type="function">
    <text evidence="6 8">Hydrolyzes phosphatidylinositol 4,5-bisphosphate (PtIns(4,5)P2) and the signaling molecule phosphatidylinositol 1,4,5-trisphosphate (PtIns(1,4,5)P3), and thereby modulates cellular signaling events.</text>
</comment>
<comment type="catalytic activity">
    <reaction evidence="8">
        <text>a 1,2-diacyl-sn-glycero-3-phospho-(1D-myo-inositol-4,5-bisphosphate) + H2O = a 1,2-diacyl-sn-glycero-3-phospho-(1D-myo-inositol 4-phosphate) + phosphate</text>
        <dbReference type="Rhea" id="RHEA:22764"/>
        <dbReference type="ChEBI" id="CHEBI:15377"/>
        <dbReference type="ChEBI" id="CHEBI:43474"/>
        <dbReference type="ChEBI" id="CHEBI:58178"/>
        <dbReference type="ChEBI" id="CHEBI:58456"/>
        <dbReference type="EC" id="3.1.3.36"/>
    </reaction>
</comment>
<comment type="subunit">
    <text evidence="2 7">Interacts with APPL1, PHETA1 and PHETA2. Interacts with several Rab GTPases, at least RAB1A, RAB2A, RAB5A, RAB6A, RAB8A, RAB9A and RAB33B; these interactions may play a dual role in targeting INPP5B to the specific membranes and stimulating its phosphatase activity. Interacts preferentially with non-phosphorylated RAB8A; phosphorylation of RAB8A on 'Thr-72' disrupts this interaction (By similarity). Interacts with INPP5F (PubMed:25869668).</text>
</comment>
<comment type="subcellular location">
    <subcellularLocation>
        <location evidence="8">Cytoplasm</location>
        <location evidence="8">Cytosol</location>
    </subcellularLocation>
    <subcellularLocation>
        <location evidence="2">Endoplasmic reticulum-Golgi intermediate compartment</location>
    </subcellularLocation>
    <subcellularLocation>
        <location evidence="2">Early endosome membrane</location>
    </subcellularLocation>
    <subcellularLocation>
        <location evidence="2">Membrane</location>
        <topology evidence="2">Peripheral membrane protein</topology>
        <orientation evidence="2">Cytoplasmic side</orientation>
    </subcellularLocation>
    <subcellularLocation>
        <location evidence="8">Cytoplasmic vesicle</location>
        <location evidence="8">Phagosome membrane</location>
    </subcellularLocation>
</comment>
<comment type="alternative products">
    <event type="alternative splicing"/>
    <isoform>
        <id>Q8K337-1</id>
        <name>1</name>
        <sequence type="displayed"/>
    </isoform>
    <isoform>
        <id>Q8K337-2</id>
        <name>2</name>
        <sequence type="described" ref="VSP_042226 VSP_042227"/>
    </isoform>
    <isoform>
        <id>Q8K337-3</id>
        <name>3</name>
        <sequence type="described" ref="VSP_042224 VSP_042225"/>
    </isoform>
</comment>
<comment type="tissue specificity">
    <text evidence="8">Detected in kidney, liver, brain, lung and testis (at protein level). Detected in kidney and liver, and at lower levels in brain, lung and testis.</text>
</comment>
<comment type="domain">
    <text evidence="1">The ASH (ASPM-SPD2-Hydin) and RhoGAP (Rho GTPase activating) domains form a single folding module. The ASH domain has an immunoglobulin-like fold, the Rho-GAP domain lacks the catalytic arginine and is catalytically inactive. The ASH-RhoGAP module regulates the majority of the protein-protein interactions currently described. The ASH domain mediates association with membrane-targeting Rab GTPases. The Rho-GAP domain interacts with the endocytic adapter APPL1, which is then displaced by PHETA1 and PHETA2 as endosomes mature, all three interactions rely on F&amp;H motifs, an approximately 12-13 amino-acid sequence centered around Phe and His residues essential for binding (By similarity).</text>
</comment>
<comment type="PTM">
    <text evidence="1">Isoprenylation at Cys-990 may be required for localization at the membrane.</text>
</comment>
<comment type="PTM">
    <text evidence="1">May be proteolytically cleaved after Lys-320 as inferred from N-terminal protein sequence of the 75 kda form.</text>
</comment>
<comment type="similarity">
    <text evidence="11">Belongs to the inositol 1,4,5-trisphosphate 5-phosphatase type II family.</text>
</comment>
<comment type="sequence caution" evidence="11">
    <conflict type="erroneous initiation">
        <sequence resource="EMBL-CDS" id="AAB95412"/>
    </conflict>
    <text>Truncated N-terminus.</text>
</comment>
<gene>
    <name type="primary">Inpp5b</name>
</gene>
<name>I5P2_MOUSE</name>
<sequence>MDQSVAIQETLVEGEYCVIAVQGVLCKGDSRQSRLLGLVRYRLENDAQEHALFLYTHRRMAITGDDVSLDQIVPLSKDFMLEEVSPDGELYILGSDVTVQLNTAELKLVFQLPFGSHTRTFLQEVARACPGFDPETRDPEFEWLSRHTCAEPDAESPKPREWNSDPGTRSGFAPIGGSRHQSRNARRGLEDVLPRGPGYILLWGGAAEEPEFLLAEEMHEGGPVRGRRPLAGRRDEALEEADWEMSAGGGSRERDCAGVSNVDSSRPNGRGPDQPSGARCPEKPENSLTRQNKSKSDMSEKVRSATVTVSDKAHILSVQKFGLRDTIVRSHLVQKEENYTYIQNFRFFVGTYNVNGQSPKECLRPWLSHSALAPDVYCVGFQELDLSKEAFFFHDTPKEEEWFKAVSESLHPDAKYAKVKFVRLVGIMLLLYVKQEHAAYISEVEAETVGTGIMGRMGNKGGVAIRFQLHNTSICVVNSHLAAHTEEYERRNQDYRDICSRMQFPQVDPSQPPLTINKHDVILWLGDLNYRIEELDVGKVKKLVEEKAFQTLYAHDQLKIQVAARTIFDGFTEGEITFQPTYKYDTGSDDWDTSEKCRAPAWCDRILWKGKNITQLSYQSHMALKTSDHKPVSSVFDIGVRVVNEELYRKTLEEIVRSLDKMENANIPSVTLSKREFCFENVKYMQLQTESFTIHNSQVPCQFEFINKPDEESYCKQWLTARPSKGFLLPDSHVEIELELFVNKSTATKLNSGKDTIEDILVLHLERGKDYFLSVSGNYLPSCFGSPIHTLCYMREPILDLPLKTVSDLTLMSVQTADDRSQLENPMEIPKELWMMVDYLYRNAVQQEDLFQQPGLRPEFDHIRDCLDTGMIDQLCANNHSVAEALLLFLESLPEPVICYSAYHSCLECSGNYAASKQIILTLPSFHKNVFNYLMAFLQELLKNSANNHLDENILASIFGSLLLRNPARHQKLDMAEKKKAQEFIHQFLCGPL</sequence>
<accession>Q8K337</accession>
<accession>O54996</accession>
<accession>Q8CF65</accession>
<accession>Q91ZF8</accession>
<protein>
    <recommendedName>
        <fullName>Type II inositol 1,4,5-trisphosphate 5-phosphatase</fullName>
        <ecNumber>3.1.3.36</ecNumber>
    </recommendedName>
    <alternativeName>
        <fullName>Inositol polyphosphate-5-phosphatase B</fullName>
    </alternativeName>
    <alternativeName>
        <fullName>Phosphoinositide 5-phosphatase</fullName>
        <shortName>5PTase</shortName>
    </alternativeName>
</protein>
<evidence type="ECO:0000250" key="1"/>
<evidence type="ECO:0000250" key="2">
    <source>
        <dbReference type="UniProtKB" id="P32019"/>
    </source>
</evidence>
<evidence type="ECO:0000255" key="3"/>
<evidence type="ECO:0000255" key="4">
    <source>
        <dbReference type="PROSITE-ProRule" id="PRU00172"/>
    </source>
</evidence>
<evidence type="ECO:0000256" key="5">
    <source>
        <dbReference type="SAM" id="MobiDB-lite"/>
    </source>
</evidence>
<evidence type="ECO:0000269" key="6">
    <source>
    </source>
</evidence>
<evidence type="ECO:0000269" key="7">
    <source>
    </source>
</evidence>
<evidence type="ECO:0000269" key="8">
    <source>
    </source>
</evidence>
<evidence type="ECO:0000303" key="9">
    <source>
    </source>
</evidence>
<evidence type="ECO:0000303" key="10">
    <source>
    </source>
</evidence>
<evidence type="ECO:0000305" key="11"/>
<evidence type="ECO:0007829" key="12">
    <source>
        <dbReference type="PDB" id="2KIG"/>
    </source>
</evidence>
<feature type="chain" id="PRO_0000415365" description="Type II inositol 1,4,5-trisphosphate 5-phosphatase">
    <location>
        <begin position="1"/>
        <end position="990"/>
    </location>
</feature>
<feature type="propeptide" id="PRO_0000422294" description="Removed in mature form" evidence="3">
    <location>
        <begin position="991"/>
        <end position="993"/>
    </location>
</feature>
<feature type="domain" description="PH">
    <location>
        <begin position="22"/>
        <end position="148"/>
    </location>
</feature>
<feature type="domain" description="Rho-GAP" evidence="4">
    <location>
        <begin position="821"/>
        <end position="993"/>
    </location>
</feature>
<feature type="region of interest" description="Disordered" evidence="5">
    <location>
        <begin position="149"/>
        <end position="191"/>
    </location>
</feature>
<feature type="region of interest" description="Disordered" evidence="5">
    <location>
        <begin position="236"/>
        <end position="304"/>
    </location>
</feature>
<feature type="region of interest" description="5-phosphatase" evidence="1">
    <location>
        <begin position="342"/>
        <end position="668"/>
    </location>
</feature>
<feature type="region of interest" description="ASH" evidence="1">
    <location>
        <begin position="669"/>
        <end position="782"/>
    </location>
</feature>
<feature type="compositionally biased region" description="Basic and acidic residues" evidence="5">
    <location>
        <begin position="149"/>
        <end position="163"/>
    </location>
</feature>
<feature type="compositionally biased region" description="Basic and acidic residues" evidence="5">
    <location>
        <begin position="294"/>
        <end position="303"/>
    </location>
</feature>
<feature type="binding site" evidence="1">
    <location>
        <position position="355"/>
    </location>
    <ligand>
        <name>Mg(2+)</name>
        <dbReference type="ChEBI" id="CHEBI:18420"/>
    </ligand>
</feature>
<feature type="binding site" evidence="1">
    <location>
        <position position="383"/>
    </location>
    <ligand>
        <name>Mg(2+)</name>
        <dbReference type="ChEBI" id="CHEBI:18420"/>
    </ligand>
</feature>
<feature type="binding site" evidence="1">
    <location>
        <position position="383"/>
    </location>
    <ligand>
        <name>substrate</name>
    </ligand>
</feature>
<feature type="binding site" evidence="1">
    <location>
        <begin position="459"/>
        <end position="460"/>
    </location>
    <ligand>
        <name>substrate</name>
    </ligand>
</feature>
<feature type="binding site" evidence="1">
    <location>
        <begin position="582"/>
        <end position="583"/>
    </location>
    <ligand>
        <name>substrate</name>
    </ligand>
</feature>
<feature type="binding site" evidence="1">
    <location>
        <begin position="596"/>
        <end position="598"/>
    </location>
    <ligand>
        <name>substrate</name>
    </ligand>
</feature>
<feature type="site" description="Arginine finger; crucial for GTP hydrolysis by stabilizing the transition state" evidence="4">
    <location>
        <position position="852"/>
    </location>
</feature>
<feature type="modified residue" description="Cysteine methyl ester" evidence="3">
    <location>
        <position position="990"/>
    </location>
</feature>
<feature type="lipid moiety-binding region" description="S-farnesyl cysteine" evidence="3">
    <location>
        <position position="990"/>
    </location>
</feature>
<feature type="splice variant" id="VSP_042224" description="In isoform 3." evidence="10">
    <location>
        <begin position="1"/>
        <end position="251"/>
    </location>
</feature>
<feature type="splice variant" id="VSP_042225" description="In isoform 3." evidence="10">
    <original>RERDCAG</original>
    <variation>MKGKLLC</variation>
    <location>
        <begin position="252"/>
        <end position="258"/>
    </location>
</feature>
<feature type="splice variant" id="VSP_042226" description="In isoform 2." evidence="9">
    <original>LMSVQTADDRSQLEN</original>
    <variation>PGCQCNGAAAVLARG</variation>
    <location>
        <begin position="811"/>
        <end position="825"/>
    </location>
</feature>
<feature type="splice variant" id="VSP_042227" description="In isoform 2." evidence="9">
    <location>
        <begin position="826"/>
        <end position="993"/>
    </location>
</feature>
<feature type="sequence conflict" description="In Ref. 2; BAC25089." evidence="11" ref="2">
    <original>L</original>
    <variation>P</variation>
    <location>
        <position position="993"/>
    </location>
</feature>
<feature type="helix" evidence="12">
    <location>
        <begin position="3"/>
        <end position="10"/>
    </location>
</feature>
<feature type="strand" evidence="12">
    <location>
        <begin position="17"/>
        <end position="19"/>
    </location>
</feature>
<feature type="strand" evidence="12">
    <location>
        <begin position="22"/>
        <end position="27"/>
    </location>
</feature>
<feature type="strand" evidence="12">
    <location>
        <begin position="30"/>
        <end position="43"/>
    </location>
</feature>
<feature type="strand" evidence="12">
    <location>
        <begin position="46"/>
        <end position="56"/>
    </location>
</feature>
<feature type="helix" evidence="12">
    <location>
        <begin position="61"/>
        <end position="63"/>
    </location>
</feature>
<feature type="strand" evidence="12">
    <location>
        <begin position="69"/>
        <end position="73"/>
    </location>
</feature>
<feature type="strand" evidence="12">
    <location>
        <begin position="88"/>
        <end position="90"/>
    </location>
</feature>
<feature type="strand" evidence="12">
    <location>
        <begin position="94"/>
        <end position="102"/>
    </location>
</feature>
<feature type="strand" evidence="12">
    <location>
        <begin position="107"/>
        <end position="112"/>
    </location>
</feature>
<feature type="helix" evidence="12">
    <location>
        <begin position="118"/>
        <end position="127"/>
    </location>
</feature>
<feature type="turn" evidence="12">
    <location>
        <begin position="128"/>
        <end position="132"/>
    </location>
</feature>
<feature type="helix" evidence="12">
    <location>
        <begin position="144"/>
        <end position="146"/>
    </location>
</feature>
<keyword id="KW-0002">3D-structure</keyword>
<keyword id="KW-0025">Alternative splicing</keyword>
<keyword id="KW-0963">Cytoplasm</keyword>
<keyword id="KW-0968">Cytoplasmic vesicle</keyword>
<keyword id="KW-0967">Endosome</keyword>
<keyword id="KW-0378">Hydrolase</keyword>
<keyword id="KW-0443">Lipid metabolism</keyword>
<keyword id="KW-0449">Lipoprotein</keyword>
<keyword id="KW-0460">Magnesium</keyword>
<keyword id="KW-0472">Membrane</keyword>
<keyword id="KW-0479">Metal-binding</keyword>
<keyword id="KW-0488">Methylation</keyword>
<keyword id="KW-0636">Prenylation</keyword>
<keyword id="KW-1185">Reference proteome</keyword>
<proteinExistence type="evidence at protein level"/>
<organism>
    <name type="scientific">Mus musculus</name>
    <name type="common">Mouse</name>
    <dbReference type="NCBI Taxonomy" id="10090"/>
    <lineage>
        <taxon>Eukaryota</taxon>
        <taxon>Metazoa</taxon>
        <taxon>Chordata</taxon>
        <taxon>Craniata</taxon>
        <taxon>Vertebrata</taxon>
        <taxon>Euteleostomi</taxon>
        <taxon>Mammalia</taxon>
        <taxon>Eutheria</taxon>
        <taxon>Euarchontoglires</taxon>
        <taxon>Glires</taxon>
        <taxon>Rodentia</taxon>
        <taxon>Myomorpha</taxon>
        <taxon>Muroidea</taxon>
        <taxon>Muridae</taxon>
        <taxon>Murinae</taxon>
        <taxon>Mus</taxon>
        <taxon>Mus</taxon>
    </lineage>
</organism>
<dbReference type="EC" id="3.1.3.36"/>
<dbReference type="EMBL" id="AY007563">
    <property type="protein sequence ID" value="AAG23293.1"/>
    <property type="molecule type" value="mRNA"/>
</dbReference>
<dbReference type="EMBL" id="AK004601">
    <property type="protein sequence ID" value="BAC25089.1"/>
    <property type="molecule type" value="mRNA"/>
</dbReference>
<dbReference type="EMBL" id="AL606907">
    <property type="status" value="NOT_ANNOTATED_CDS"/>
    <property type="molecule type" value="Genomic_DNA"/>
</dbReference>
<dbReference type="EMBL" id="AL606933">
    <property type="status" value="NOT_ANNOTATED_CDS"/>
    <property type="molecule type" value="Genomic_DNA"/>
</dbReference>
<dbReference type="EMBL" id="BC028864">
    <property type="protein sequence ID" value="AAH28864.1"/>
    <property type="molecule type" value="mRNA"/>
</dbReference>
<dbReference type="EMBL" id="AF040094">
    <property type="protein sequence ID" value="AAB95412.2"/>
    <property type="status" value="ALT_INIT"/>
    <property type="molecule type" value="mRNA"/>
</dbReference>
<dbReference type="CCDS" id="CCDS38876.1">
    <molecule id="Q8K337-1"/>
</dbReference>
<dbReference type="PIR" id="T42384">
    <property type="entry name" value="T42384"/>
</dbReference>
<dbReference type="RefSeq" id="NP_032411.3">
    <molecule id="Q8K337-1"/>
    <property type="nucleotide sequence ID" value="NM_008385.4"/>
</dbReference>
<dbReference type="PDB" id="2KIG">
    <property type="method" value="NMR"/>
    <property type="chains" value="A=1-156"/>
</dbReference>
<dbReference type="PDBsum" id="2KIG"/>
<dbReference type="SMR" id="Q8K337"/>
<dbReference type="BioGRID" id="200768">
    <property type="interactions" value="39"/>
</dbReference>
<dbReference type="FunCoup" id="Q8K337">
    <property type="interactions" value="2277"/>
</dbReference>
<dbReference type="IntAct" id="Q8K337">
    <property type="interactions" value="29"/>
</dbReference>
<dbReference type="STRING" id="10090.ENSMUSP00000092375"/>
<dbReference type="iPTMnet" id="Q8K337"/>
<dbReference type="PhosphoSitePlus" id="Q8K337"/>
<dbReference type="PaxDb" id="10090-ENSMUSP00000092375"/>
<dbReference type="PeptideAtlas" id="Q8K337"/>
<dbReference type="ProteomicsDB" id="266941">
    <molecule id="Q8K337-1"/>
</dbReference>
<dbReference type="ProteomicsDB" id="266942">
    <molecule id="Q8K337-2"/>
</dbReference>
<dbReference type="ProteomicsDB" id="266943">
    <molecule id="Q8K337-3"/>
</dbReference>
<dbReference type="Pumba" id="Q8K337"/>
<dbReference type="ABCD" id="Q8K337">
    <property type="antibodies" value="1 sequenced antibody"/>
</dbReference>
<dbReference type="Antibodypedia" id="31808">
    <property type="antibodies" value="167 antibodies from 24 providers"/>
</dbReference>
<dbReference type="DNASU" id="16330"/>
<dbReference type="Ensembl" id="ENSMUST00000094782.10">
    <molecule id="Q8K337-1"/>
    <property type="protein sequence ID" value="ENSMUSP00000092375.4"/>
    <property type="gene ID" value="ENSMUSG00000028894.19"/>
</dbReference>
<dbReference type="Ensembl" id="ENSMUST00000184454.8">
    <molecule id="Q8K337-2"/>
    <property type="protein sequence ID" value="ENSMUSP00000139221.2"/>
    <property type="gene ID" value="ENSMUSG00000028894.19"/>
</dbReference>
<dbReference type="GeneID" id="16330"/>
<dbReference type="KEGG" id="mmu:16330"/>
<dbReference type="UCSC" id="uc008uqy.2">
    <molecule id="Q8K337-1"/>
    <property type="organism name" value="mouse"/>
</dbReference>
<dbReference type="UCSC" id="uc008uqz.1">
    <molecule id="Q8K337-3"/>
    <property type="organism name" value="mouse"/>
</dbReference>
<dbReference type="AGR" id="MGI:103257"/>
<dbReference type="CTD" id="3633"/>
<dbReference type="MGI" id="MGI:103257">
    <property type="gene designation" value="Inpp5b"/>
</dbReference>
<dbReference type="VEuPathDB" id="HostDB:ENSMUSG00000028894"/>
<dbReference type="eggNOG" id="KOG0565">
    <property type="taxonomic scope" value="Eukaryota"/>
</dbReference>
<dbReference type="eggNOG" id="KOG4270">
    <property type="taxonomic scope" value="Eukaryota"/>
</dbReference>
<dbReference type="GeneTree" id="ENSGT00940000156762"/>
<dbReference type="HOGENOM" id="CLU_006779_2_0_1"/>
<dbReference type="InParanoid" id="Q8K337"/>
<dbReference type="OMA" id="VREDAWC"/>
<dbReference type="OrthoDB" id="7862313at2759"/>
<dbReference type="PhylomeDB" id="Q8K337"/>
<dbReference type="TreeFam" id="TF317034"/>
<dbReference type="Reactome" id="R-MMU-1855183">
    <property type="pathway name" value="Synthesis of IP2, IP, and Ins in the cytosol"/>
</dbReference>
<dbReference type="Reactome" id="R-MMU-1855204">
    <property type="pathway name" value="Synthesis of IP3 and IP4 in the cytosol"/>
</dbReference>
<dbReference type="BioGRID-ORCS" id="16330">
    <property type="hits" value="5 hits in 81 CRISPR screens"/>
</dbReference>
<dbReference type="ChiTaRS" id="Inpp5b">
    <property type="organism name" value="mouse"/>
</dbReference>
<dbReference type="EvolutionaryTrace" id="Q8K337"/>
<dbReference type="PRO" id="PR:Q8K337"/>
<dbReference type="Proteomes" id="UP000000589">
    <property type="component" value="Chromosome 4"/>
</dbReference>
<dbReference type="RNAct" id="Q8K337">
    <property type="molecule type" value="protein"/>
</dbReference>
<dbReference type="Bgee" id="ENSMUSG00000028894">
    <property type="expression patterns" value="Expressed in right lung lobe and 254 other cell types or tissues"/>
</dbReference>
<dbReference type="ExpressionAtlas" id="Q8K337">
    <property type="expression patterns" value="baseline and differential"/>
</dbReference>
<dbReference type="GO" id="GO:0005829">
    <property type="term" value="C:cytosol"/>
    <property type="evidence" value="ECO:0000314"/>
    <property type="project" value="MGI"/>
</dbReference>
<dbReference type="GO" id="GO:0031901">
    <property type="term" value="C:early endosome membrane"/>
    <property type="evidence" value="ECO:0007669"/>
    <property type="project" value="UniProtKB-SubCell"/>
</dbReference>
<dbReference type="GO" id="GO:0005793">
    <property type="term" value="C:endoplasmic reticulum-Golgi intermediate compartment"/>
    <property type="evidence" value="ECO:0007669"/>
    <property type="project" value="UniProtKB-SubCell"/>
</dbReference>
<dbReference type="GO" id="GO:0016020">
    <property type="term" value="C:membrane"/>
    <property type="evidence" value="ECO:0000314"/>
    <property type="project" value="MGI"/>
</dbReference>
<dbReference type="GO" id="GO:0030670">
    <property type="term" value="C:phagocytic vesicle membrane"/>
    <property type="evidence" value="ECO:0007669"/>
    <property type="project" value="UniProtKB-SubCell"/>
</dbReference>
<dbReference type="GO" id="GO:0052658">
    <property type="term" value="F:inositol-1,4,5-trisphosphate 5-phosphatase activity"/>
    <property type="evidence" value="ECO:0000314"/>
    <property type="project" value="UniProtKB"/>
</dbReference>
<dbReference type="GO" id="GO:0004445">
    <property type="term" value="F:inositol-polyphosphate 5-phosphatase activity"/>
    <property type="evidence" value="ECO:0000266"/>
    <property type="project" value="MGI"/>
</dbReference>
<dbReference type="GO" id="GO:0046872">
    <property type="term" value="F:metal ion binding"/>
    <property type="evidence" value="ECO:0007669"/>
    <property type="project" value="UniProtKB-KW"/>
</dbReference>
<dbReference type="GO" id="GO:0004439">
    <property type="term" value="F:phosphatidylinositol-4,5-bisphosphate 5-phosphatase activity"/>
    <property type="evidence" value="ECO:0000314"/>
    <property type="project" value="UniProtKB"/>
</dbReference>
<dbReference type="GO" id="GO:0030317">
    <property type="term" value="P:flagellated sperm motility"/>
    <property type="evidence" value="ECO:0000315"/>
    <property type="project" value="MGI"/>
</dbReference>
<dbReference type="GO" id="GO:0001701">
    <property type="term" value="P:in utero embryonic development"/>
    <property type="evidence" value="ECO:0000316"/>
    <property type="project" value="MGI"/>
</dbReference>
<dbReference type="GO" id="GO:0046856">
    <property type="term" value="P:phosphatidylinositol dephosphorylation"/>
    <property type="evidence" value="ECO:0000314"/>
    <property type="project" value="UniProtKB"/>
</dbReference>
<dbReference type="GO" id="GO:0070613">
    <property type="term" value="P:regulation of protein processing"/>
    <property type="evidence" value="ECO:0000315"/>
    <property type="project" value="MGI"/>
</dbReference>
<dbReference type="GO" id="GO:0007165">
    <property type="term" value="P:signal transduction"/>
    <property type="evidence" value="ECO:0007669"/>
    <property type="project" value="InterPro"/>
</dbReference>
<dbReference type="GO" id="GO:0007283">
    <property type="term" value="P:spermatogenesis"/>
    <property type="evidence" value="ECO:0000315"/>
    <property type="project" value="MGI"/>
</dbReference>
<dbReference type="CDD" id="cd09093">
    <property type="entry name" value="INPP5c_INPP5B"/>
    <property type="match status" value="1"/>
</dbReference>
<dbReference type="CDD" id="cd13383">
    <property type="entry name" value="PH_OCRL2"/>
    <property type="match status" value="1"/>
</dbReference>
<dbReference type="CDD" id="cd04380">
    <property type="entry name" value="RhoGAP_OCRL1"/>
    <property type="match status" value="1"/>
</dbReference>
<dbReference type="FunFam" id="2.60.40.10:FF:000132">
    <property type="entry name" value="Inositol polyphosphate 5-phosphatase OCRL-1 isoform b"/>
    <property type="match status" value="1"/>
</dbReference>
<dbReference type="FunFam" id="1.10.555.10:FF:000012">
    <property type="entry name" value="Putative inositol polyphosphate 5-phosphatase OCRL-1"/>
    <property type="match status" value="1"/>
</dbReference>
<dbReference type="FunFam" id="2.30.29.110:FF:000002">
    <property type="entry name" value="Type II inositol 1,4,5-trisphosphate 5-phosphatase"/>
    <property type="match status" value="1"/>
</dbReference>
<dbReference type="FunFam" id="3.60.10.10:FF:000004">
    <property type="entry name" value="Type II inositol 1,4,5-trisphosphate 5-phosphatase"/>
    <property type="match status" value="1"/>
</dbReference>
<dbReference type="Gene3D" id="2.30.29.110">
    <property type="match status" value="1"/>
</dbReference>
<dbReference type="Gene3D" id="3.60.10.10">
    <property type="entry name" value="Endonuclease/exonuclease/phosphatase"/>
    <property type="match status" value="1"/>
</dbReference>
<dbReference type="Gene3D" id="2.60.40.10">
    <property type="entry name" value="Immunoglobulins"/>
    <property type="match status" value="1"/>
</dbReference>
<dbReference type="Gene3D" id="1.10.555.10">
    <property type="entry name" value="Rho GTPase activation protein"/>
    <property type="match status" value="1"/>
</dbReference>
<dbReference type="InterPro" id="IPR036691">
    <property type="entry name" value="Endo/exonu/phosph_ase_sf"/>
</dbReference>
<dbReference type="InterPro" id="IPR013783">
    <property type="entry name" value="Ig-like_fold"/>
</dbReference>
<dbReference type="InterPro" id="IPR031896">
    <property type="entry name" value="INPP5B_PH_dom"/>
</dbReference>
<dbReference type="InterPro" id="IPR046985">
    <property type="entry name" value="IP5"/>
</dbReference>
<dbReference type="InterPro" id="IPR000300">
    <property type="entry name" value="IPPc"/>
</dbReference>
<dbReference type="InterPro" id="IPR048869">
    <property type="entry name" value="OCRL-1_2_ASH"/>
</dbReference>
<dbReference type="InterPro" id="IPR037793">
    <property type="entry name" value="OCRL1/INPP5B_INPP5c"/>
</dbReference>
<dbReference type="InterPro" id="IPR008936">
    <property type="entry name" value="Rho_GTPase_activation_prot"/>
</dbReference>
<dbReference type="InterPro" id="IPR000198">
    <property type="entry name" value="RhoGAP_dom"/>
</dbReference>
<dbReference type="InterPro" id="IPR047078">
    <property type="entry name" value="RhoGAP_OCRL1"/>
</dbReference>
<dbReference type="PANTHER" id="PTHR11200">
    <property type="entry name" value="INOSITOL 5-PHOSPHATASE"/>
    <property type="match status" value="1"/>
</dbReference>
<dbReference type="PANTHER" id="PTHR11200:SF300">
    <property type="entry name" value="TYPE II INOSITOL 1,4,5-TRISPHOSPHATE 5-PHOSPHATASE"/>
    <property type="match status" value="1"/>
</dbReference>
<dbReference type="Pfam" id="PF22669">
    <property type="entry name" value="Exo_endo_phos2"/>
    <property type="match status" value="1"/>
</dbReference>
<dbReference type="Pfam" id="PF16776">
    <property type="entry name" value="INPP5B_PH"/>
    <property type="match status" value="1"/>
</dbReference>
<dbReference type="Pfam" id="PF21310">
    <property type="entry name" value="OCRL-like_ASH"/>
    <property type="match status" value="1"/>
</dbReference>
<dbReference type="Pfam" id="PF00620">
    <property type="entry name" value="RhoGAP"/>
    <property type="match status" value="1"/>
</dbReference>
<dbReference type="SMART" id="SM00128">
    <property type="entry name" value="IPPc"/>
    <property type="match status" value="1"/>
</dbReference>
<dbReference type="SMART" id="SM00324">
    <property type="entry name" value="RhoGAP"/>
    <property type="match status" value="1"/>
</dbReference>
<dbReference type="SUPFAM" id="SSF56219">
    <property type="entry name" value="DNase I-like"/>
    <property type="match status" value="1"/>
</dbReference>
<dbReference type="SUPFAM" id="SSF48350">
    <property type="entry name" value="GTPase activation domain, GAP"/>
    <property type="match status" value="1"/>
</dbReference>
<dbReference type="PROSITE" id="PS50238">
    <property type="entry name" value="RHOGAP"/>
    <property type="match status" value="1"/>
</dbReference>
<reference key="1">
    <citation type="journal article" date="2001" name="Biochem. J.">
        <title>Mammalian inositol polyphosphate 5-phosphatase II can compensate for the absence of all three yeast Sac1-like-domain-containing 5-phosphatases.</title>
        <authorList>
            <person name="O'Malley C.J."/>
            <person name="McColl B.K."/>
            <person name="Kong A.M."/>
            <person name="Ellis S.L."/>
            <person name="Wijayaratnam A.P.W."/>
            <person name="Sambrook J."/>
            <person name="Mitchell C.A."/>
        </authorList>
    </citation>
    <scope>NUCLEOTIDE SEQUENCE [MRNA] (ISOFORM 2)</scope>
    <scope>FUNCTION</scope>
    <source>
        <tissue>Brain</tissue>
    </source>
</reference>
<reference key="2">
    <citation type="journal article" date="2005" name="Science">
        <title>The transcriptional landscape of the mammalian genome.</title>
        <authorList>
            <person name="Carninci P."/>
            <person name="Kasukawa T."/>
            <person name="Katayama S."/>
            <person name="Gough J."/>
            <person name="Frith M.C."/>
            <person name="Maeda N."/>
            <person name="Oyama R."/>
            <person name="Ravasi T."/>
            <person name="Lenhard B."/>
            <person name="Wells C."/>
            <person name="Kodzius R."/>
            <person name="Shimokawa K."/>
            <person name="Bajic V.B."/>
            <person name="Brenner S.E."/>
            <person name="Batalov S."/>
            <person name="Forrest A.R."/>
            <person name="Zavolan M."/>
            <person name="Davis M.J."/>
            <person name="Wilming L.G."/>
            <person name="Aidinis V."/>
            <person name="Allen J.E."/>
            <person name="Ambesi-Impiombato A."/>
            <person name="Apweiler R."/>
            <person name="Aturaliya R.N."/>
            <person name="Bailey T.L."/>
            <person name="Bansal M."/>
            <person name="Baxter L."/>
            <person name="Beisel K.W."/>
            <person name="Bersano T."/>
            <person name="Bono H."/>
            <person name="Chalk A.M."/>
            <person name="Chiu K.P."/>
            <person name="Choudhary V."/>
            <person name="Christoffels A."/>
            <person name="Clutterbuck D.R."/>
            <person name="Crowe M.L."/>
            <person name="Dalla E."/>
            <person name="Dalrymple B.P."/>
            <person name="de Bono B."/>
            <person name="Della Gatta G."/>
            <person name="di Bernardo D."/>
            <person name="Down T."/>
            <person name="Engstrom P."/>
            <person name="Fagiolini M."/>
            <person name="Faulkner G."/>
            <person name="Fletcher C.F."/>
            <person name="Fukushima T."/>
            <person name="Furuno M."/>
            <person name="Futaki S."/>
            <person name="Gariboldi M."/>
            <person name="Georgii-Hemming P."/>
            <person name="Gingeras T.R."/>
            <person name="Gojobori T."/>
            <person name="Green R.E."/>
            <person name="Gustincich S."/>
            <person name="Harbers M."/>
            <person name="Hayashi Y."/>
            <person name="Hensch T.K."/>
            <person name="Hirokawa N."/>
            <person name="Hill D."/>
            <person name="Huminiecki L."/>
            <person name="Iacono M."/>
            <person name="Ikeo K."/>
            <person name="Iwama A."/>
            <person name="Ishikawa T."/>
            <person name="Jakt M."/>
            <person name="Kanapin A."/>
            <person name="Katoh M."/>
            <person name="Kawasawa Y."/>
            <person name="Kelso J."/>
            <person name="Kitamura H."/>
            <person name="Kitano H."/>
            <person name="Kollias G."/>
            <person name="Krishnan S.P."/>
            <person name="Kruger A."/>
            <person name="Kummerfeld S.K."/>
            <person name="Kurochkin I.V."/>
            <person name="Lareau L.F."/>
            <person name="Lazarevic D."/>
            <person name="Lipovich L."/>
            <person name="Liu J."/>
            <person name="Liuni S."/>
            <person name="McWilliam S."/>
            <person name="Madan Babu M."/>
            <person name="Madera M."/>
            <person name="Marchionni L."/>
            <person name="Matsuda H."/>
            <person name="Matsuzawa S."/>
            <person name="Miki H."/>
            <person name="Mignone F."/>
            <person name="Miyake S."/>
            <person name="Morris K."/>
            <person name="Mottagui-Tabar S."/>
            <person name="Mulder N."/>
            <person name="Nakano N."/>
            <person name="Nakauchi H."/>
            <person name="Ng P."/>
            <person name="Nilsson R."/>
            <person name="Nishiguchi S."/>
            <person name="Nishikawa S."/>
            <person name="Nori F."/>
            <person name="Ohara O."/>
            <person name="Okazaki Y."/>
            <person name="Orlando V."/>
            <person name="Pang K.C."/>
            <person name="Pavan W.J."/>
            <person name="Pavesi G."/>
            <person name="Pesole G."/>
            <person name="Petrovsky N."/>
            <person name="Piazza S."/>
            <person name="Reed J."/>
            <person name="Reid J.F."/>
            <person name="Ring B.Z."/>
            <person name="Ringwald M."/>
            <person name="Rost B."/>
            <person name="Ruan Y."/>
            <person name="Salzberg S.L."/>
            <person name="Sandelin A."/>
            <person name="Schneider C."/>
            <person name="Schoenbach C."/>
            <person name="Sekiguchi K."/>
            <person name="Semple C.A."/>
            <person name="Seno S."/>
            <person name="Sessa L."/>
            <person name="Sheng Y."/>
            <person name="Shibata Y."/>
            <person name="Shimada H."/>
            <person name="Shimada K."/>
            <person name="Silva D."/>
            <person name="Sinclair B."/>
            <person name="Sperling S."/>
            <person name="Stupka E."/>
            <person name="Sugiura K."/>
            <person name="Sultana R."/>
            <person name="Takenaka Y."/>
            <person name="Taki K."/>
            <person name="Tammoja K."/>
            <person name="Tan S.L."/>
            <person name="Tang S."/>
            <person name="Taylor M.S."/>
            <person name="Tegner J."/>
            <person name="Teichmann S.A."/>
            <person name="Ueda H.R."/>
            <person name="van Nimwegen E."/>
            <person name="Verardo R."/>
            <person name="Wei C.L."/>
            <person name="Yagi K."/>
            <person name="Yamanishi H."/>
            <person name="Zabarovsky E."/>
            <person name="Zhu S."/>
            <person name="Zimmer A."/>
            <person name="Hide W."/>
            <person name="Bult C."/>
            <person name="Grimmond S.M."/>
            <person name="Teasdale R.D."/>
            <person name="Liu E.T."/>
            <person name="Brusic V."/>
            <person name="Quackenbush J."/>
            <person name="Wahlestedt C."/>
            <person name="Mattick J.S."/>
            <person name="Hume D.A."/>
            <person name="Kai C."/>
            <person name="Sasaki D."/>
            <person name="Tomaru Y."/>
            <person name="Fukuda S."/>
            <person name="Kanamori-Katayama M."/>
            <person name="Suzuki M."/>
            <person name="Aoki J."/>
            <person name="Arakawa T."/>
            <person name="Iida J."/>
            <person name="Imamura K."/>
            <person name="Itoh M."/>
            <person name="Kato T."/>
            <person name="Kawaji H."/>
            <person name="Kawagashira N."/>
            <person name="Kawashima T."/>
            <person name="Kojima M."/>
            <person name="Kondo S."/>
            <person name="Konno H."/>
            <person name="Nakano K."/>
            <person name="Ninomiya N."/>
            <person name="Nishio T."/>
            <person name="Okada M."/>
            <person name="Plessy C."/>
            <person name="Shibata K."/>
            <person name="Shiraki T."/>
            <person name="Suzuki S."/>
            <person name="Tagami M."/>
            <person name="Waki K."/>
            <person name="Watahiki A."/>
            <person name="Okamura-Oho Y."/>
            <person name="Suzuki H."/>
            <person name="Kawai J."/>
            <person name="Hayashizaki Y."/>
        </authorList>
    </citation>
    <scope>NUCLEOTIDE SEQUENCE [LARGE SCALE MRNA] (ISOFORM 3)</scope>
    <source>
        <strain>C57BL/6J</strain>
        <tissue>Lung</tissue>
    </source>
</reference>
<reference key="3">
    <citation type="journal article" date="2009" name="PLoS Biol.">
        <title>Lineage-specific biology revealed by a finished genome assembly of the mouse.</title>
        <authorList>
            <person name="Church D.M."/>
            <person name="Goodstadt L."/>
            <person name="Hillier L.W."/>
            <person name="Zody M.C."/>
            <person name="Goldstein S."/>
            <person name="She X."/>
            <person name="Bult C.J."/>
            <person name="Agarwala R."/>
            <person name="Cherry J.L."/>
            <person name="DiCuccio M."/>
            <person name="Hlavina W."/>
            <person name="Kapustin Y."/>
            <person name="Meric P."/>
            <person name="Maglott D."/>
            <person name="Birtle Z."/>
            <person name="Marques A.C."/>
            <person name="Graves T."/>
            <person name="Zhou S."/>
            <person name="Teague B."/>
            <person name="Potamousis K."/>
            <person name="Churas C."/>
            <person name="Place M."/>
            <person name="Herschleb J."/>
            <person name="Runnheim R."/>
            <person name="Forrest D."/>
            <person name="Amos-Landgraf J."/>
            <person name="Schwartz D.C."/>
            <person name="Cheng Z."/>
            <person name="Lindblad-Toh K."/>
            <person name="Eichler E.E."/>
            <person name="Ponting C.P."/>
        </authorList>
    </citation>
    <scope>NUCLEOTIDE SEQUENCE [LARGE SCALE GENOMIC DNA]</scope>
    <source>
        <strain>C57BL/6J</strain>
    </source>
</reference>
<reference key="4">
    <citation type="journal article" date="2004" name="Genome Res.">
        <title>The status, quality, and expansion of the NIH full-length cDNA project: the Mammalian Gene Collection (MGC).</title>
        <authorList>
            <consortium name="The MGC Project Team"/>
        </authorList>
    </citation>
    <scope>NUCLEOTIDE SEQUENCE [LARGE SCALE MRNA] (ISOFORM 1)</scope>
    <source>
        <strain>FVB/N</strain>
        <tissue>Mammary tumor</tissue>
    </source>
</reference>
<reference key="5">
    <citation type="journal article" date="1998" name="J. Biol. Chem.">
        <title>Distinct membrane and cytosolic forms of inositol polyphosphate 5-phosphatase II. Efficient membrane localization requires two discrete domains.</title>
        <authorList>
            <person name="Matzaris M."/>
            <person name="O'Malley C.J."/>
            <person name="Badger A."/>
            <person name="Speed C.J."/>
            <person name="Bird P.I."/>
            <person name="Mitchell C.A."/>
        </authorList>
    </citation>
    <scope>NUCLEOTIDE SEQUENCE [MRNA] OF 204-993 (ISOFORM 1)</scope>
    <scope>FUNCTION</scope>
    <scope>CATALYTIC ACTIVITY</scope>
    <scope>SUBCELLULAR LOCATION</scope>
    <scope>TISSUE SPECIFICITY</scope>
    <source>
        <tissue>Brain</tissue>
        <tissue>Kidney</tissue>
    </source>
</reference>
<reference key="6">
    <citation type="journal article" date="2010" name="Cell">
        <title>A tissue-specific atlas of mouse protein phosphorylation and expression.</title>
        <authorList>
            <person name="Huttlin E.L."/>
            <person name="Jedrychowski M.P."/>
            <person name="Elias J.E."/>
            <person name="Goswami T."/>
            <person name="Rad R."/>
            <person name="Beausoleil S.A."/>
            <person name="Villen J."/>
            <person name="Haas W."/>
            <person name="Sowa M.E."/>
            <person name="Gygi S.P."/>
        </authorList>
    </citation>
    <scope>IDENTIFICATION BY MASS SPECTROMETRY [LARGE SCALE ANALYSIS]</scope>
    <source>
        <tissue>Kidney</tissue>
        <tissue>Liver</tissue>
        <tissue>Lung</tissue>
        <tissue>Spleen</tissue>
        <tissue>Testis</tissue>
    </source>
</reference>
<reference key="7">
    <citation type="journal article" date="2012" name="Mol. Biol. Cell">
        <title>Recruitment of OCRL and Inpp5B to phagosomes by Rab5 and APPL1 depletes phosphoinositides and attenuates Akt signaling.</title>
        <authorList>
            <person name="Bohdanowicz M."/>
            <person name="Balkin D.M."/>
            <person name="De Camilli P."/>
            <person name="Grinstein S."/>
        </authorList>
    </citation>
    <scope>SUBCELLULAR LOCATION</scope>
    <scope>INTERACTION WITH APPL1</scope>
</reference>
<reference key="8">
    <citation type="journal article" date="2015" name="J. Cell Biol.">
        <title>Sac2/INPP5F is an inositol 4-phosphatase that functions in the endocytic pathway.</title>
        <authorList>
            <person name="Nakatsu F."/>
            <person name="Messa M."/>
            <person name="Nandez R."/>
            <person name="Czapla H."/>
            <person name="Zou Y."/>
            <person name="Strittmatter S.M."/>
            <person name="De Camilli P."/>
        </authorList>
    </citation>
    <scope>INTERACTION WITH INPP5F</scope>
</reference>
<reference key="9">
    <citation type="journal article" date="2009" name="EMBO J.">
        <title>A PH domain within OCRL bridges clathrin-mediated membrane trafficking to phosphoinositide metabolism.</title>
        <authorList>
            <person name="Mao Y."/>
            <person name="Balkin D.M."/>
            <person name="Zoncu R."/>
            <person name="Erdmann K.S."/>
            <person name="Tomasini L."/>
            <person name="Hu F."/>
            <person name="Jin M.M."/>
            <person name="Hodsdon M.E."/>
            <person name="De Camilli P."/>
        </authorList>
    </citation>
    <scope>STRUCTURE BY NMR OF 1-156</scope>
    <scope>PH DOMAIN</scope>
</reference>